<sequence>MRFIISLLFVFTLIFNLAFSHIGIDVSSGTNESGFECFKQKKYSRAIIRCYESIGSIDTNCKPSIENAKKAGIETIDVYLFPCYDCGNPENQVTTTSHYLKDYLKDLDFLWLDIEGPGQYWSGSYDNNKKFIQGLLDSAKTAGFKHVGIYTSESQWPGIVGSWDGGKDYPIWYANYDGAENFNDFSPFNGWTKPHMKQYAGNINECGLGIDKNYWE</sequence>
<protein>
    <recommendedName>
        <fullName>Probable GH family 25 lysozyme 5</fullName>
        <ecNumber>3.2.1.17</ecNumber>
    </recommendedName>
    <alternativeName>
        <fullName>1,4-beta-N-acetylmuramidase 5</fullName>
    </alternativeName>
</protein>
<feature type="signal peptide" evidence="1">
    <location>
        <begin position="1"/>
        <end position="20"/>
    </location>
</feature>
<feature type="chain" id="PRO_0000330651" description="Probable GH family 25 lysozyme 5">
    <location>
        <begin position="21"/>
        <end position="216"/>
    </location>
</feature>
<feature type="domain" description="Ch-type lysozyme" evidence="2">
    <location>
        <begin position="21"/>
        <end position="216"/>
    </location>
</feature>
<feature type="active site" evidence="2">
    <location>
        <position position="25"/>
    </location>
</feature>
<feature type="active site" evidence="2">
    <location>
        <position position="113"/>
    </location>
</feature>
<feature type="active site" evidence="2">
    <location>
        <position position="115"/>
    </location>
</feature>
<feature type="glycosylation site" description="N-linked (GlcNAc...) asparagine" evidence="1">
    <location>
        <position position="31"/>
    </location>
</feature>
<comment type="catalytic activity">
    <reaction>
        <text>Hydrolysis of (1-&gt;4)-beta-linkages between N-acetylmuramic acid and N-acetyl-D-glucosamine residues in a peptidoglycan and between N-acetyl-D-glucosamine residues in chitodextrins.</text>
        <dbReference type="EC" id="3.2.1.17"/>
    </reaction>
</comment>
<comment type="subcellular location">
    <subcellularLocation>
        <location evidence="3">Secreted</location>
    </subcellularLocation>
</comment>
<comment type="similarity">
    <text evidence="2 3">Belongs to the glycosyl hydrolase 25 family.</text>
</comment>
<accession>Q54BL8</accession>
<gene>
    <name type="ORF">DDB_G0293566</name>
</gene>
<dbReference type="EC" id="3.2.1.17"/>
<dbReference type="EMBL" id="AAFI02000218">
    <property type="protein sequence ID" value="EAL60595.1"/>
    <property type="molecule type" value="Genomic_DNA"/>
</dbReference>
<dbReference type="RefSeq" id="XP_629011.1">
    <property type="nucleotide sequence ID" value="XM_629009.1"/>
</dbReference>
<dbReference type="SMR" id="Q54BL8"/>
<dbReference type="FunCoup" id="Q54BL8">
    <property type="interactions" value="2"/>
</dbReference>
<dbReference type="STRING" id="44689.Q54BL8"/>
<dbReference type="GlyGen" id="Q54BL8">
    <property type="glycosylation" value="1 site"/>
</dbReference>
<dbReference type="PaxDb" id="44689-DDB0252581"/>
<dbReference type="EnsemblProtists" id="EAL60595">
    <property type="protein sequence ID" value="EAL60595"/>
    <property type="gene ID" value="DDB_G0293566"/>
</dbReference>
<dbReference type="GeneID" id="8629295"/>
<dbReference type="KEGG" id="ddi:DDB_G0293566"/>
<dbReference type="dictyBase" id="DDB_G0293566">
    <property type="gene designation" value="lyEh3"/>
</dbReference>
<dbReference type="VEuPathDB" id="AmoebaDB:DDB_G0293566"/>
<dbReference type="eggNOG" id="ENOG502S41H">
    <property type="taxonomic scope" value="Eukaryota"/>
</dbReference>
<dbReference type="HOGENOM" id="CLU_073372_3_0_1"/>
<dbReference type="InParanoid" id="Q54BL8"/>
<dbReference type="OMA" id="YTNWYDW"/>
<dbReference type="PhylomeDB" id="Q54BL8"/>
<dbReference type="PRO" id="PR:Q54BL8"/>
<dbReference type="Proteomes" id="UP000002195">
    <property type="component" value="Chromosome 6"/>
</dbReference>
<dbReference type="GO" id="GO:0005576">
    <property type="term" value="C:extracellular region"/>
    <property type="evidence" value="ECO:0007669"/>
    <property type="project" value="UniProtKB-SubCell"/>
</dbReference>
<dbReference type="GO" id="GO:0003796">
    <property type="term" value="F:lysozyme activity"/>
    <property type="evidence" value="ECO:0007669"/>
    <property type="project" value="UniProtKB-EC"/>
</dbReference>
<dbReference type="GO" id="GO:0016998">
    <property type="term" value="P:cell wall macromolecule catabolic process"/>
    <property type="evidence" value="ECO:0007669"/>
    <property type="project" value="InterPro"/>
</dbReference>
<dbReference type="GO" id="GO:0042742">
    <property type="term" value="P:defense response to bacterium"/>
    <property type="evidence" value="ECO:0007669"/>
    <property type="project" value="UniProtKB-KW"/>
</dbReference>
<dbReference type="GO" id="GO:0031640">
    <property type="term" value="P:killing of cells of another organism"/>
    <property type="evidence" value="ECO:0007669"/>
    <property type="project" value="UniProtKB-KW"/>
</dbReference>
<dbReference type="GO" id="GO:0009253">
    <property type="term" value="P:peptidoglycan catabolic process"/>
    <property type="evidence" value="ECO:0007669"/>
    <property type="project" value="InterPro"/>
</dbReference>
<dbReference type="GO" id="GO:0007165">
    <property type="term" value="P:signal transduction"/>
    <property type="evidence" value="ECO:0000318"/>
    <property type="project" value="GO_Central"/>
</dbReference>
<dbReference type="CDD" id="cd06416">
    <property type="entry name" value="GH25_Lys1-like"/>
    <property type="match status" value="1"/>
</dbReference>
<dbReference type="FunFam" id="3.20.20.80:FF:000101">
    <property type="entry name" value="Lysozyme, putative"/>
    <property type="match status" value="1"/>
</dbReference>
<dbReference type="Gene3D" id="3.20.20.80">
    <property type="entry name" value="Glycosidases"/>
    <property type="match status" value="1"/>
</dbReference>
<dbReference type="InterPro" id="IPR051595">
    <property type="entry name" value="GH25_Enzymes"/>
</dbReference>
<dbReference type="InterPro" id="IPR002053">
    <property type="entry name" value="Glyco_hydro_25"/>
</dbReference>
<dbReference type="InterPro" id="IPR017853">
    <property type="entry name" value="Glycoside_hydrolase_SF"/>
</dbReference>
<dbReference type="PANTHER" id="PTHR23208:SF32">
    <property type="entry name" value="GH FAMILY 25 LYSOZYME 5-RELATED"/>
    <property type="match status" value="1"/>
</dbReference>
<dbReference type="PANTHER" id="PTHR23208">
    <property type="entry name" value="LYSOZYME PROTEIN"/>
    <property type="match status" value="1"/>
</dbReference>
<dbReference type="Pfam" id="PF01183">
    <property type="entry name" value="Glyco_hydro_25"/>
    <property type="match status" value="1"/>
</dbReference>
<dbReference type="SUPFAM" id="SSF51445">
    <property type="entry name" value="(Trans)glycosidases"/>
    <property type="match status" value="1"/>
</dbReference>
<dbReference type="PROSITE" id="PS51904">
    <property type="entry name" value="GLYCOSYL_HYDROL_F25_2"/>
    <property type="match status" value="1"/>
</dbReference>
<evidence type="ECO:0000255" key="1"/>
<evidence type="ECO:0000255" key="2">
    <source>
        <dbReference type="PROSITE-ProRule" id="PRU01252"/>
    </source>
</evidence>
<evidence type="ECO:0000305" key="3"/>
<reference key="1">
    <citation type="journal article" date="2005" name="Nature">
        <title>The genome of the social amoeba Dictyostelium discoideum.</title>
        <authorList>
            <person name="Eichinger L."/>
            <person name="Pachebat J.A."/>
            <person name="Gloeckner G."/>
            <person name="Rajandream M.A."/>
            <person name="Sucgang R."/>
            <person name="Berriman M."/>
            <person name="Song J."/>
            <person name="Olsen R."/>
            <person name="Szafranski K."/>
            <person name="Xu Q."/>
            <person name="Tunggal B."/>
            <person name="Kummerfeld S."/>
            <person name="Madera M."/>
            <person name="Konfortov B.A."/>
            <person name="Rivero F."/>
            <person name="Bankier A.T."/>
            <person name="Lehmann R."/>
            <person name="Hamlin N."/>
            <person name="Davies R."/>
            <person name="Gaudet P."/>
            <person name="Fey P."/>
            <person name="Pilcher K."/>
            <person name="Chen G."/>
            <person name="Saunders D."/>
            <person name="Sodergren E.J."/>
            <person name="Davis P."/>
            <person name="Kerhornou A."/>
            <person name="Nie X."/>
            <person name="Hall N."/>
            <person name="Anjard C."/>
            <person name="Hemphill L."/>
            <person name="Bason N."/>
            <person name="Farbrother P."/>
            <person name="Desany B."/>
            <person name="Just E."/>
            <person name="Morio T."/>
            <person name="Rost R."/>
            <person name="Churcher C.M."/>
            <person name="Cooper J."/>
            <person name="Haydock S."/>
            <person name="van Driessche N."/>
            <person name="Cronin A."/>
            <person name="Goodhead I."/>
            <person name="Muzny D.M."/>
            <person name="Mourier T."/>
            <person name="Pain A."/>
            <person name="Lu M."/>
            <person name="Harper D."/>
            <person name="Lindsay R."/>
            <person name="Hauser H."/>
            <person name="James K.D."/>
            <person name="Quiles M."/>
            <person name="Madan Babu M."/>
            <person name="Saito T."/>
            <person name="Buchrieser C."/>
            <person name="Wardroper A."/>
            <person name="Felder M."/>
            <person name="Thangavelu M."/>
            <person name="Johnson D."/>
            <person name="Knights A."/>
            <person name="Loulseged H."/>
            <person name="Mungall K.L."/>
            <person name="Oliver K."/>
            <person name="Price C."/>
            <person name="Quail M.A."/>
            <person name="Urushihara H."/>
            <person name="Hernandez J."/>
            <person name="Rabbinowitsch E."/>
            <person name="Steffen D."/>
            <person name="Sanders M."/>
            <person name="Ma J."/>
            <person name="Kohara Y."/>
            <person name="Sharp S."/>
            <person name="Simmonds M.N."/>
            <person name="Spiegler S."/>
            <person name="Tivey A."/>
            <person name="Sugano S."/>
            <person name="White B."/>
            <person name="Walker D."/>
            <person name="Woodward J.R."/>
            <person name="Winckler T."/>
            <person name="Tanaka Y."/>
            <person name="Shaulsky G."/>
            <person name="Schleicher M."/>
            <person name="Weinstock G.M."/>
            <person name="Rosenthal A."/>
            <person name="Cox E.C."/>
            <person name="Chisholm R.L."/>
            <person name="Gibbs R.A."/>
            <person name="Loomis W.F."/>
            <person name="Platzer M."/>
            <person name="Kay R.R."/>
            <person name="Williams J.G."/>
            <person name="Dear P.H."/>
            <person name="Noegel A.A."/>
            <person name="Barrell B.G."/>
            <person name="Kuspa A."/>
        </authorList>
    </citation>
    <scope>NUCLEOTIDE SEQUENCE [LARGE SCALE GENOMIC DNA]</scope>
    <source>
        <strain>AX4</strain>
    </source>
</reference>
<keyword id="KW-0929">Antimicrobial</keyword>
<keyword id="KW-0081">Bacteriolytic enzyme</keyword>
<keyword id="KW-0325">Glycoprotein</keyword>
<keyword id="KW-0326">Glycosidase</keyword>
<keyword id="KW-0378">Hydrolase</keyword>
<keyword id="KW-1185">Reference proteome</keyword>
<keyword id="KW-0964">Secreted</keyword>
<keyword id="KW-0732">Signal</keyword>
<organism>
    <name type="scientific">Dictyostelium discoideum</name>
    <name type="common">Social amoeba</name>
    <dbReference type="NCBI Taxonomy" id="44689"/>
    <lineage>
        <taxon>Eukaryota</taxon>
        <taxon>Amoebozoa</taxon>
        <taxon>Evosea</taxon>
        <taxon>Eumycetozoa</taxon>
        <taxon>Dictyostelia</taxon>
        <taxon>Dictyosteliales</taxon>
        <taxon>Dictyosteliaceae</taxon>
        <taxon>Dictyostelium</taxon>
    </lineage>
</organism>
<proteinExistence type="inferred from homology"/>
<name>LYSG5_DICDI</name>